<evidence type="ECO:0000255" key="1"/>
<evidence type="ECO:0000269" key="2">
    <source>
    </source>
</evidence>
<evidence type="ECO:0000303" key="3">
    <source>
    </source>
</evidence>
<evidence type="ECO:0000303" key="4">
    <source>
    </source>
</evidence>
<evidence type="ECO:0000305" key="5"/>
<evidence type="ECO:0000312" key="6">
    <source>
        <dbReference type="FlyBase" id="FBgn0011581"/>
    </source>
</evidence>
<feature type="signal peptide" evidence="1">
    <location>
        <begin position="1"/>
        <end position="24"/>
    </location>
</feature>
<feature type="propeptide" id="PRO_0000021797">
    <location>
        <begin position="25"/>
        <end position="84"/>
    </location>
</feature>
<feature type="peptide" id="PRO_0000021798" description="Dromyosuppressin">
    <location>
        <begin position="87"/>
        <end position="96"/>
    </location>
</feature>
<feature type="modified residue" description="Phenylalanine amide" evidence="2">
    <location>
        <position position="96"/>
    </location>
</feature>
<sequence>MSFAQFFVACCLAIVLLAVSNTRAAVQGPPLCQSGIVEEMPPHIRKVCQALENSDQLTSALKSYINNEASALVANSDDLLKNYNKRTDVDHVFLRFGKRR</sequence>
<protein>
    <recommendedName>
        <fullName evidence="3">Dromyosuppressin</fullName>
    </recommendedName>
    <alternativeName>
        <fullName evidence="4">TDVDHVFLRFamide</fullName>
    </alternativeName>
</protein>
<proteinExistence type="evidence at protein level"/>
<dbReference type="EMBL" id="AE014297">
    <property type="protein sequence ID" value="AAF56283.1"/>
    <property type="molecule type" value="Genomic_DNA"/>
</dbReference>
<dbReference type="EMBL" id="AY075325">
    <property type="protein sequence ID" value="AAL68192.1"/>
    <property type="molecule type" value="mRNA"/>
</dbReference>
<dbReference type="RefSeq" id="NP_001262911.1">
    <property type="nucleotide sequence ID" value="NM_001275982.1"/>
</dbReference>
<dbReference type="RefSeq" id="NP_001287503.1">
    <property type="nucleotide sequence ID" value="NM_001300574.1"/>
</dbReference>
<dbReference type="RefSeq" id="NP_536772.1">
    <property type="nucleotide sequence ID" value="NM_080511.3"/>
</dbReference>
<dbReference type="FunCoup" id="P61849">
    <property type="interactions" value="94"/>
</dbReference>
<dbReference type="STRING" id="7227.FBpp0312058"/>
<dbReference type="PaxDb" id="7227-FBpp0083991"/>
<dbReference type="DNASU" id="44324"/>
<dbReference type="EnsemblMetazoa" id="FBtr0084607">
    <property type="protein sequence ID" value="FBpp0083991"/>
    <property type="gene ID" value="FBgn0011581"/>
</dbReference>
<dbReference type="EnsemblMetazoa" id="FBtr0334600">
    <property type="protein sequence ID" value="FBpp0306667"/>
    <property type="gene ID" value="FBgn0011581"/>
</dbReference>
<dbReference type="EnsemblMetazoa" id="FBtr0346341">
    <property type="protein sequence ID" value="FBpp0312058"/>
    <property type="gene ID" value="FBgn0011581"/>
</dbReference>
<dbReference type="GeneID" id="44324"/>
<dbReference type="KEGG" id="dme:Dmel_CG6440"/>
<dbReference type="UCSC" id="CG6440-RA">
    <property type="organism name" value="d. melanogaster"/>
</dbReference>
<dbReference type="AGR" id="FB:FBgn0011581"/>
<dbReference type="CTD" id="44324"/>
<dbReference type="FlyBase" id="FBgn0011581">
    <property type="gene designation" value="Ms"/>
</dbReference>
<dbReference type="VEuPathDB" id="VectorBase:FBgn0011581"/>
<dbReference type="eggNOG" id="ENOG502SDA3">
    <property type="taxonomic scope" value="Eukaryota"/>
</dbReference>
<dbReference type="HOGENOM" id="CLU_177213_0_0_1"/>
<dbReference type="InParanoid" id="P61849"/>
<dbReference type="OMA" id="HIKKVCM"/>
<dbReference type="OrthoDB" id="6355109at2759"/>
<dbReference type="PhylomeDB" id="P61849"/>
<dbReference type="BioGRID-ORCS" id="44324">
    <property type="hits" value="0 hits in 1 CRISPR screen"/>
</dbReference>
<dbReference type="GenomeRNAi" id="44324"/>
<dbReference type="PRO" id="PR:P61849"/>
<dbReference type="Proteomes" id="UP000000803">
    <property type="component" value="Chromosome 3R"/>
</dbReference>
<dbReference type="Bgee" id="FBgn0011581">
    <property type="expression patterns" value="Expressed in adult capability neuron in brain and 74 other cell types or tissues"/>
</dbReference>
<dbReference type="ExpressionAtlas" id="P61849">
    <property type="expression patterns" value="baseline and differential"/>
</dbReference>
<dbReference type="GO" id="GO:0005615">
    <property type="term" value="C:extracellular space"/>
    <property type="evidence" value="ECO:0000314"/>
    <property type="project" value="FlyBase"/>
</dbReference>
<dbReference type="GO" id="GO:0005184">
    <property type="term" value="F:neuropeptide hormone activity"/>
    <property type="evidence" value="ECO:0000304"/>
    <property type="project" value="FlyBase"/>
</dbReference>
<dbReference type="GO" id="GO:0071855">
    <property type="term" value="F:neuropeptide receptor binding"/>
    <property type="evidence" value="ECO:0000353"/>
    <property type="project" value="FlyBase"/>
</dbReference>
<dbReference type="GO" id="GO:0008344">
    <property type="term" value="P:adult locomotory behavior"/>
    <property type="evidence" value="ECO:0000315"/>
    <property type="project" value="FlyBase"/>
</dbReference>
<dbReference type="GO" id="GO:0060457">
    <property type="term" value="P:negative regulation of digestive system process"/>
    <property type="evidence" value="ECO:0000314"/>
    <property type="project" value="FlyBase"/>
</dbReference>
<dbReference type="GO" id="GO:0045822">
    <property type="term" value="P:negative regulation of heart contraction"/>
    <property type="evidence" value="ECO:0000314"/>
    <property type="project" value="FlyBase"/>
</dbReference>
<dbReference type="GO" id="GO:0010459">
    <property type="term" value="P:negative regulation of heart rate"/>
    <property type="evidence" value="ECO:0000314"/>
    <property type="project" value="FlyBase"/>
</dbReference>
<dbReference type="GO" id="GO:0045986">
    <property type="term" value="P:negative regulation of smooth muscle contraction"/>
    <property type="evidence" value="ECO:0000314"/>
    <property type="project" value="FlyBase"/>
</dbReference>
<dbReference type="GO" id="GO:0007218">
    <property type="term" value="P:neuropeptide signaling pathway"/>
    <property type="evidence" value="ECO:0000314"/>
    <property type="project" value="FlyBase"/>
</dbReference>
<accession>P61849</accession>
<accession>P41494</accession>
<accession>Q9VC91</accession>
<keyword id="KW-0027">Amidation</keyword>
<keyword id="KW-0165">Cleavage on pair of basic residues</keyword>
<keyword id="KW-0903">Direct protein sequencing</keyword>
<keyword id="KW-0527">Neuropeptide</keyword>
<keyword id="KW-1185">Reference proteome</keyword>
<keyword id="KW-0964">Secreted</keyword>
<keyword id="KW-0732">Signal</keyword>
<comment type="function">
    <text>Myoinhibiting neuropeptide.</text>
</comment>
<comment type="subcellular location">
    <subcellularLocation>
        <location>Secreted</location>
    </subcellularLocation>
</comment>
<comment type="similarity">
    <text evidence="5">Belongs to the myosuppressin family.</text>
</comment>
<gene>
    <name evidence="6" type="primary">Ms</name>
    <name evidence="6" type="ORF">CG6440</name>
</gene>
<reference key="1">
    <citation type="journal article" date="2000" name="Science">
        <title>The genome sequence of Drosophila melanogaster.</title>
        <authorList>
            <person name="Adams M.D."/>
            <person name="Celniker S.E."/>
            <person name="Holt R.A."/>
            <person name="Evans C.A."/>
            <person name="Gocayne J.D."/>
            <person name="Amanatides P.G."/>
            <person name="Scherer S.E."/>
            <person name="Li P.W."/>
            <person name="Hoskins R.A."/>
            <person name="Galle R.F."/>
            <person name="George R.A."/>
            <person name="Lewis S.E."/>
            <person name="Richards S."/>
            <person name="Ashburner M."/>
            <person name="Henderson S.N."/>
            <person name="Sutton G.G."/>
            <person name="Wortman J.R."/>
            <person name="Yandell M.D."/>
            <person name="Zhang Q."/>
            <person name="Chen L.X."/>
            <person name="Brandon R.C."/>
            <person name="Rogers Y.-H.C."/>
            <person name="Blazej R.G."/>
            <person name="Champe M."/>
            <person name="Pfeiffer B.D."/>
            <person name="Wan K.H."/>
            <person name="Doyle C."/>
            <person name="Baxter E.G."/>
            <person name="Helt G."/>
            <person name="Nelson C.R."/>
            <person name="Miklos G.L.G."/>
            <person name="Abril J.F."/>
            <person name="Agbayani A."/>
            <person name="An H.-J."/>
            <person name="Andrews-Pfannkoch C."/>
            <person name="Baldwin D."/>
            <person name="Ballew R.M."/>
            <person name="Basu A."/>
            <person name="Baxendale J."/>
            <person name="Bayraktaroglu L."/>
            <person name="Beasley E.M."/>
            <person name="Beeson K.Y."/>
            <person name="Benos P.V."/>
            <person name="Berman B.P."/>
            <person name="Bhandari D."/>
            <person name="Bolshakov S."/>
            <person name="Borkova D."/>
            <person name="Botchan M.R."/>
            <person name="Bouck J."/>
            <person name="Brokstein P."/>
            <person name="Brottier P."/>
            <person name="Burtis K.C."/>
            <person name="Busam D.A."/>
            <person name="Butler H."/>
            <person name="Cadieu E."/>
            <person name="Center A."/>
            <person name="Chandra I."/>
            <person name="Cherry J.M."/>
            <person name="Cawley S."/>
            <person name="Dahlke C."/>
            <person name="Davenport L.B."/>
            <person name="Davies P."/>
            <person name="de Pablos B."/>
            <person name="Delcher A."/>
            <person name="Deng Z."/>
            <person name="Mays A.D."/>
            <person name="Dew I."/>
            <person name="Dietz S.M."/>
            <person name="Dodson K."/>
            <person name="Doup L.E."/>
            <person name="Downes M."/>
            <person name="Dugan-Rocha S."/>
            <person name="Dunkov B.C."/>
            <person name="Dunn P."/>
            <person name="Durbin K.J."/>
            <person name="Evangelista C.C."/>
            <person name="Ferraz C."/>
            <person name="Ferriera S."/>
            <person name="Fleischmann W."/>
            <person name="Fosler C."/>
            <person name="Gabrielian A.E."/>
            <person name="Garg N.S."/>
            <person name="Gelbart W.M."/>
            <person name="Glasser K."/>
            <person name="Glodek A."/>
            <person name="Gong F."/>
            <person name="Gorrell J.H."/>
            <person name="Gu Z."/>
            <person name="Guan P."/>
            <person name="Harris M."/>
            <person name="Harris N.L."/>
            <person name="Harvey D.A."/>
            <person name="Heiman T.J."/>
            <person name="Hernandez J.R."/>
            <person name="Houck J."/>
            <person name="Hostin D."/>
            <person name="Houston K.A."/>
            <person name="Howland T.J."/>
            <person name="Wei M.-H."/>
            <person name="Ibegwam C."/>
            <person name="Jalali M."/>
            <person name="Kalush F."/>
            <person name="Karpen G.H."/>
            <person name="Ke Z."/>
            <person name="Kennison J.A."/>
            <person name="Ketchum K.A."/>
            <person name="Kimmel B.E."/>
            <person name="Kodira C.D."/>
            <person name="Kraft C.L."/>
            <person name="Kravitz S."/>
            <person name="Kulp D."/>
            <person name="Lai Z."/>
            <person name="Lasko P."/>
            <person name="Lei Y."/>
            <person name="Levitsky A.A."/>
            <person name="Li J.H."/>
            <person name="Li Z."/>
            <person name="Liang Y."/>
            <person name="Lin X."/>
            <person name="Liu X."/>
            <person name="Mattei B."/>
            <person name="McIntosh T.C."/>
            <person name="McLeod M.P."/>
            <person name="McPherson D."/>
            <person name="Merkulov G."/>
            <person name="Milshina N.V."/>
            <person name="Mobarry C."/>
            <person name="Morris J."/>
            <person name="Moshrefi A."/>
            <person name="Mount S.M."/>
            <person name="Moy M."/>
            <person name="Murphy B."/>
            <person name="Murphy L."/>
            <person name="Muzny D.M."/>
            <person name="Nelson D.L."/>
            <person name="Nelson D.R."/>
            <person name="Nelson K.A."/>
            <person name="Nixon K."/>
            <person name="Nusskern D.R."/>
            <person name="Pacleb J.M."/>
            <person name="Palazzolo M."/>
            <person name="Pittman G.S."/>
            <person name="Pan S."/>
            <person name="Pollard J."/>
            <person name="Puri V."/>
            <person name="Reese M.G."/>
            <person name="Reinert K."/>
            <person name="Remington K."/>
            <person name="Saunders R.D.C."/>
            <person name="Scheeler F."/>
            <person name="Shen H."/>
            <person name="Shue B.C."/>
            <person name="Siden-Kiamos I."/>
            <person name="Simpson M."/>
            <person name="Skupski M.P."/>
            <person name="Smith T.J."/>
            <person name="Spier E."/>
            <person name="Spradling A.C."/>
            <person name="Stapleton M."/>
            <person name="Strong R."/>
            <person name="Sun E."/>
            <person name="Svirskas R."/>
            <person name="Tector C."/>
            <person name="Turner R."/>
            <person name="Venter E."/>
            <person name="Wang A.H."/>
            <person name="Wang X."/>
            <person name="Wang Z.-Y."/>
            <person name="Wassarman D.A."/>
            <person name="Weinstock G.M."/>
            <person name="Weissenbach J."/>
            <person name="Williams S.M."/>
            <person name="Woodage T."/>
            <person name="Worley K.C."/>
            <person name="Wu D."/>
            <person name="Yang S."/>
            <person name="Yao Q.A."/>
            <person name="Ye J."/>
            <person name="Yeh R.-F."/>
            <person name="Zaveri J.S."/>
            <person name="Zhan M."/>
            <person name="Zhang G."/>
            <person name="Zhao Q."/>
            <person name="Zheng L."/>
            <person name="Zheng X.H."/>
            <person name="Zhong F.N."/>
            <person name="Zhong W."/>
            <person name="Zhou X."/>
            <person name="Zhu S.C."/>
            <person name="Zhu X."/>
            <person name="Smith H.O."/>
            <person name="Gibbs R.A."/>
            <person name="Myers E.W."/>
            <person name="Rubin G.M."/>
            <person name="Venter J.C."/>
        </authorList>
    </citation>
    <scope>NUCLEOTIDE SEQUENCE [LARGE SCALE GENOMIC DNA]</scope>
    <source>
        <strain>Berkeley</strain>
    </source>
</reference>
<reference key="2">
    <citation type="journal article" date="2002" name="Genome Biol.">
        <title>Annotation of the Drosophila melanogaster euchromatic genome: a systematic review.</title>
        <authorList>
            <person name="Misra S."/>
            <person name="Crosby M.A."/>
            <person name="Mungall C.J."/>
            <person name="Matthews B.B."/>
            <person name="Campbell K.S."/>
            <person name="Hradecky P."/>
            <person name="Huang Y."/>
            <person name="Kaminker J.S."/>
            <person name="Millburn G.H."/>
            <person name="Prochnik S.E."/>
            <person name="Smith C.D."/>
            <person name="Tupy J.L."/>
            <person name="Whitfield E.J."/>
            <person name="Bayraktaroglu L."/>
            <person name="Berman B.P."/>
            <person name="Bettencourt B.R."/>
            <person name="Celniker S.E."/>
            <person name="de Grey A.D.N.J."/>
            <person name="Drysdale R.A."/>
            <person name="Harris N.L."/>
            <person name="Richter J."/>
            <person name="Russo S."/>
            <person name="Schroeder A.J."/>
            <person name="Shu S.Q."/>
            <person name="Stapleton M."/>
            <person name="Yamada C."/>
            <person name="Ashburner M."/>
            <person name="Gelbart W.M."/>
            <person name="Rubin G.M."/>
            <person name="Lewis S.E."/>
        </authorList>
    </citation>
    <scope>GENOME REANNOTATION</scope>
    <source>
        <strain>Berkeley</strain>
    </source>
</reference>
<reference key="3">
    <citation type="journal article" date="2002" name="Genome Biol.">
        <title>A Drosophila full-length cDNA resource.</title>
        <authorList>
            <person name="Stapleton M."/>
            <person name="Carlson J.W."/>
            <person name="Brokstein P."/>
            <person name="Yu C."/>
            <person name="Champe M."/>
            <person name="George R.A."/>
            <person name="Guarin H."/>
            <person name="Kronmiller B."/>
            <person name="Pacleb J.M."/>
            <person name="Park S."/>
            <person name="Wan K.H."/>
            <person name="Rubin G.M."/>
            <person name="Celniker S.E."/>
        </authorList>
    </citation>
    <scope>NUCLEOTIDE SEQUENCE [LARGE SCALE MRNA]</scope>
    <source>
        <strain>Berkeley</strain>
        <tissue>Ovary</tissue>
    </source>
</reference>
<reference key="4">
    <citation type="journal article" date="1992" name="J. Mol. Neurosci.">
        <title>Isolation and structural characterization of Drosophila TDVDHVFLRFamide and FMRFamide-containing neural peptides.</title>
        <authorList>
            <person name="Nichols R."/>
        </authorList>
    </citation>
    <scope>PROTEIN SEQUENCE OF 87-96</scope>
</reference>
<reference key="5">
    <citation type="journal article" date="2002" name="J. Biol. Chem.">
        <title>Peptidomics of the larval Drosophila melanogaster central nervous system.</title>
        <authorList>
            <person name="Baggerman G."/>
            <person name="Cerstiaens A."/>
            <person name="De Loof A."/>
            <person name="Schoofs L."/>
        </authorList>
    </citation>
    <scope>PROTEIN SEQUENCE OF 87-96</scope>
    <scope>AMIDATION AT PHE-96</scope>
    <source>
        <tissue>Larva</tissue>
    </source>
</reference>
<name>NEMS_DROME</name>
<organism>
    <name type="scientific">Drosophila melanogaster</name>
    <name type="common">Fruit fly</name>
    <dbReference type="NCBI Taxonomy" id="7227"/>
    <lineage>
        <taxon>Eukaryota</taxon>
        <taxon>Metazoa</taxon>
        <taxon>Ecdysozoa</taxon>
        <taxon>Arthropoda</taxon>
        <taxon>Hexapoda</taxon>
        <taxon>Insecta</taxon>
        <taxon>Pterygota</taxon>
        <taxon>Neoptera</taxon>
        <taxon>Endopterygota</taxon>
        <taxon>Diptera</taxon>
        <taxon>Brachycera</taxon>
        <taxon>Muscomorpha</taxon>
        <taxon>Ephydroidea</taxon>
        <taxon>Drosophilidae</taxon>
        <taxon>Drosophila</taxon>
        <taxon>Sophophora</taxon>
    </lineage>
</organism>